<dbReference type="EMBL" id="AE014297">
    <property type="protein sequence ID" value="AAF56759.1"/>
    <property type="molecule type" value="Genomic_DNA"/>
</dbReference>
<dbReference type="EMBL" id="AY113617">
    <property type="protein sequence ID" value="AAM29622.1"/>
    <property type="molecule type" value="mRNA"/>
</dbReference>
<dbReference type="RefSeq" id="NP_651595.1">
    <property type="nucleotide sequence ID" value="NM_143338.3"/>
</dbReference>
<dbReference type="SMR" id="Q9VAY7"/>
<dbReference type="FunCoup" id="Q9VAY7">
    <property type="interactions" value="870"/>
</dbReference>
<dbReference type="IntAct" id="Q9VAY7">
    <property type="interactions" value="5"/>
</dbReference>
<dbReference type="PaxDb" id="7227-FBpp0084639"/>
<dbReference type="DNASU" id="43347"/>
<dbReference type="EnsemblMetazoa" id="FBtr0085270">
    <property type="protein sequence ID" value="FBpp0084639"/>
    <property type="gene ID" value="FBgn0039557"/>
</dbReference>
<dbReference type="GeneID" id="43347"/>
<dbReference type="KEGG" id="dme:Dmel_CG12259"/>
<dbReference type="UCSC" id="CG12259-RA">
    <property type="organism name" value="d. melanogaster"/>
</dbReference>
<dbReference type="AGR" id="FB:FBgn0039557"/>
<dbReference type="FlyBase" id="FBgn0039557">
    <property type="gene designation" value="CG12259"/>
</dbReference>
<dbReference type="VEuPathDB" id="VectorBase:FBgn0039557"/>
<dbReference type="eggNOG" id="KOG2894">
    <property type="taxonomic scope" value="Eukaryota"/>
</dbReference>
<dbReference type="GeneTree" id="ENSGT00390000004735"/>
<dbReference type="HOGENOM" id="CLU_037985_1_1_1"/>
<dbReference type="InParanoid" id="Q9VAY7"/>
<dbReference type="OMA" id="DFIWVFL"/>
<dbReference type="OrthoDB" id="1562195at2759"/>
<dbReference type="PhylomeDB" id="Q9VAY7"/>
<dbReference type="Reactome" id="R-DME-72163">
    <property type="pathway name" value="mRNA Splicing - Major Pathway"/>
</dbReference>
<dbReference type="BioGRID-ORCS" id="43347">
    <property type="hits" value="0 hits in 3 CRISPR screens"/>
</dbReference>
<dbReference type="GenomeRNAi" id="43347"/>
<dbReference type="PRO" id="PR:Q9VAY7"/>
<dbReference type="Proteomes" id="UP000000803">
    <property type="component" value="Chromosome 3R"/>
</dbReference>
<dbReference type="Bgee" id="FBgn0039557">
    <property type="expression patterns" value="Expressed in adult middle midgut class II enteroendocrine cell in adult midgut (Drosophila) and 64 other cell types or tissues"/>
</dbReference>
<dbReference type="GO" id="GO:0005654">
    <property type="term" value="C:nucleoplasm"/>
    <property type="evidence" value="ECO:0000250"/>
    <property type="project" value="FlyBase"/>
</dbReference>
<dbReference type="GO" id="GO:0005634">
    <property type="term" value="C:nucleus"/>
    <property type="evidence" value="ECO:0000318"/>
    <property type="project" value="GO_Central"/>
</dbReference>
<dbReference type="GO" id="GO:0003723">
    <property type="term" value="F:RNA binding"/>
    <property type="evidence" value="ECO:0000250"/>
    <property type="project" value="FlyBase"/>
</dbReference>
<dbReference type="GO" id="GO:0006325">
    <property type="term" value="P:chromatin organization"/>
    <property type="evidence" value="ECO:0000318"/>
    <property type="project" value="GO_Central"/>
</dbReference>
<dbReference type="InterPro" id="IPR048337">
    <property type="entry name" value="FAM50A/XAP5_C"/>
</dbReference>
<dbReference type="InterPro" id="IPR007005">
    <property type="entry name" value="XAP5"/>
</dbReference>
<dbReference type="PANTHER" id="PTHR12722:SF0">
    <property type="entry name" value="PROTEIN FAM50A"/>
    <property type="match status" value="1"/>
</dbReference>
<dbReference type="PANTHER" id="PTHR12722">
    <property type="entry name" value="XAP-5 PROTEIN-RELATED"/>
    <property type="match status" value="1"/>
</dbReference>
<dbReference type="Pfam" id="PF04921">
    <property type="entry name" value="XAP5"/>
    <property type="match status" value="1"/>
</dbReference>
<name>FAM50_DROME</name>
<comment type="similarity">
    <text evidence="2">Belongs to the FAM50 family.</text>
</comment>
<gene>
    <name type="ORF">CG12259</name>
</gene>
<organism>
    <name type="scientific">Drosophila melanogaster</name>
    <name type="common">Fruit fly</name>
    <dbReference type="NCBI Taxonomy" id="7227"/>
    <lineage>
        <taxon>Eukaryota</taxon>
        <taxon>Metazoa</taxon>
        <taxon>Ecdysozoa</taxon>
        <taxon>Arthropoda</taxon>
        <taxon>Hexapoda</taxon>
        <taxon>Insecta</taxon>
        <taxon>Pterygota</taxon>
        <taxon>Neoptera</taxon>
        <taxon>Endopterygota</taxon>
        <taxon>Diptera</taxon>
        <taxon>Brachycera</taxon>
        <taxon>Muscomorpha</taxon>
        <taxon>Ephydroidea</taxon>
        <taxon>Drosophilidae</taxon>
        <taxon>Drosophila</taxon>
        <taxon>Sophophora</taxon>
    </lineage>
</organism>
<sequence length="359" mass="42857">MAHYKGAASEAGRAAQLMKKREIQQQEIEFRKKKIEEELKLDKIENKFATHYDAVEQQLKSSTIGLVTLDEMKAKQEDIVREREKKLAQKKDEKDREKQRALEAIQAEKNKQKRQIQALSFNLDDDEEEEEEDDEDHDKKQLKIKQEDQPKPKWTEIKEDILPIKKKKICKNPDVDTSFLPDREREEQENRLREQLRQEWVMQQAELKDEDISITFSYWDGSGHRRNVLMKKGNSIYQFLQKCLELLRKEFIELKTVMADQLMYVKEDLILPHHYSFYDFIVTKARGKSGPLFQFDVHDDVRMISDASVEKEESHAGKVLLRSWYERNKHIFPASRWEPYDPTKSYDKYTIKDKDKSKK</sequence>
<accession>Q9VAY7</accession>
<reference key="1">
    <citation type="journal article" date="2000" name="Science">
        <title>The genome sequence of Drosophila melanogaster.</title>
        <authorList>
            <person name="Adams M.D."/>
            <person name="Celniker S.E."/>
            <person name="Holt R.A."/>
            <person name="Evans C.A."/>
            <person name="Gocayne J.D."/>
            <person name="Amanatides P.G."/>
            <person name="Scherer S.E."/>
            <person name="Li P.W."/>
            <person name="Hoskins R.A."/>
            <person name="Galle R.F."/>
            <person name="George R.A."/>
            <person name="Lewis S.E."/>
            <person name="Richards S."/>
            <person name="Ashburner M."/>
            <person name="Henderson S.N."/>
            <person name="Sutton G.G."/>
            <person name="Wortman J.R."/>
            <person name="Yandell M.D."/>
            <person name="Zhang Q."/>
            <person name="Chen L.X."/>
            <person name="Brandon R.C."/>
            <person name="Rogers Y.-H.C."/>
            <person name="Blazej R.G."/>
            <person name="Champe M."/>
            <person name="Pfeiffer B.D."/>
            <person name="Wan K.H."/>
            <person name="Doyle C."/>
            <person name="Baxter E.G."/>
            <person name="Helt G."/>
            <person name="Nelson C.R."/>
            <person name="Miklos G.L.G."/>
            <person name="Abril J.F."/>
            <person name="Agbayani A."/>
            <person name="An H.-J."/>
            <person name="Andrews-Pfannkoch C."/>
            <person name="Baldwin D."/>
            <person name="Ballew R.M."/>
            <person name="Basu A."/>
            <person name="Baxendale J."/>
            <person name="Bayraktaroglu L."/>
            <person name="Beasley E.M."/>
            <person name="Beeson K.Y."/>
            <person name="Benos P.V."/>
            <person name="Berman B.P."/>
            <person name="Bhandari D."/>
            <person name="Bolshakov S."/>
            <person name="Borkova D."/>
            <person name="Botchan M.R."/>
            <person name="Bouck J."/>
            <person name="Brokstein P."/>
            <person name="Brottier P."/>
            <person name="Burtis K.C."/>
            <person name="Busam D.A."/>
            <person name="Butler H."/>
            <person name="Cadieu E."/>
            <person name="Center A."/>
            <person name="Chandra I."/>
            <person name="Cherry J.M."/>
            <person name="Cawley S."/>
            <person name="Dahlke C."/>
            <person name="Davenport L.B."/>
            <person name="Davies P."/>
            <person name="de Pablos B."/>
            <person name="Delcher A."/>
            <person name="Deng Z."/>
            <person name="Mays A.D."/>
            <person name="Dew I."/>
            <person name="Dietz S.M."/>
            <person name="Dodson K."/>
            <person name="Doup L.E."/>
            <person name="Downes M."/>
            <person name="Dugan-Rocha S."/>
            <person name="Dunkov B.C."/>
            <person name="Dunn P."/>
            <person name="Durbin K.J."/>
            <person name="Evangelista C.C."/>
            <person name="Ferraz C."/>
            <person name="Ferriera S."/>
            <person name="Fleischmann W."/>
            <person name="Fosler C."/>
            <person name="Gabrielian A.E."/>
            <person name="Garg N.S."/>
            <person name="Gelbart W.M."/>
            <person name="Glasser K."/>
            <person name="Glodek A."/>
            <person name="Gong F."/>
            <person name="Gorrell J.H."/>
            <person name="Gu Z."/>
            <person name="Guan P."/>
            <person name="Harris M."/>
            <person name="Harris N.L."/>
            <person name="Harvey D.A."/>
            <person name="Heiman T.J."/>
            <person name="Hernandez J.R."/>
            <person name="Houck J."/>
            <person name="Hostin D."/>
            <person name="Houston K.A."/>
            <person name="Howland T.J."/>
            <person name="Wei M.-H."/>
            <person name="Ibegwam C."/>
            <person name="Jalali M."/>
            <person name="Kalush F."/>
            <person name="Karpen G.H."/>
            <person name="Ke Z."/>
            <person name="Kennison J.A."/>
            <person name="Ketchum K.A."/>
            <person name="Kimmel B.E."/>
            <person name="Kodira C.D."/>
            <person name="Kraft C.L."/>
            <person name="Kravitz S."/>
            <person name="Kulp D."/>
            <person name="Lai Z."/>
            <person name="Lasko P."/>
            <person name="Lei Y."/>
            <person name="Levitsky A.A."/>
            <person name="Li J.H."/>
            <person name="Li Z."/>
            <person name="Liang Y."/>
            <person name="Lin X."/>
            <person name="Liu X."/>
            <person name="Mattei B."/>
            <person name="McIntosh T.C."/>
            <person name="McLeod M.P."/>
            <person name="McPherson D."/>
            <person name="Merkulov G."/>
            <person name="Milshina N.V."/>
            <person name="Mobarry C."/>
            <person name="Morris J."/>
            <person name="Moshrefi A."/>
            <person name="Mount S.M."/>
            <person name="Moy M."/>
            <person name="Murphy B."/>
            <person name="Murphy L."/>
            <person name="Muzny D.M."/>
            <person name="Nelson D.L."/>
            <person name="Nelson D.R."/>
            <person name="Nelson K.A."/>
            <person name="Nixon K."/>
            <person name="Nusskern D.R."/>
            <person name="Pacleb J.M."/>
            <person name="Palazzolo M."/>
            <person name="Pittman G.S."/>
            <person name="Pan S."/>
            <person name="Pollard J."/>
            <person name="Puri V."/>
            <person name="Reese M.G."/>
            <person name="Reinert K."/>
            <person name="Remington K."/>
            <person name="Saunders R.D.C."/>
            <person name="Scheeler F."/>
            <person name="Shen H."/>
            <person name="Shue B.C."/>
            <person name="Siden-Kiamos I."/>
            <person name="Simpson M."/>
            <person name="Skupski M.P."/>
            <person name="Smith T.J."/>
            <person name="Spier E."/>
            <person name="Spradling A.C."/>
            <person name="Stapleton M."/>
            <person name="Strong R."/>
            <person name="Sun E."/>
            <person name="Svirskas R."/>
            <person name="Tector C."/>
            <person name="Turner R."/>
            <person name="Venter E."/>
            <person name="Wang A.H."/>
            <person name="Wang X."/>
            <person name="Wang Z.-Y."/>
            <person name="Wassarman D.A."/>
            <person name="Weinstock G.M."/>
            <person name="Weissenbach J."/>
            <person name="Williams S.M."/>
            <person name="Woodage T."/>
            <person name="Worley K.C."/>
            <person name="Wu D."/>
            <person name="Yang S."/>
            <person name="Yao Q.A."/>
            <person name="Ye J."/>
            <person name="Yeh R.-F."/>
            <person name="Zaveri J.S."/>
            <person name="Zhan M."/>
            <person name="Zhang G."/>
            <person name="Zhao Q."/>
            <person name="Zheng L."/>
            <person name="Zheng X.H."/>
            <person name="Zhong F.N."/>
            <person name="Zhong W."/>
            <person name="Zhou X."/>
            <person name="Zhu S.C."/>
            <person name="Zhu X."/>
            <person name="Smith H.O."/>
            <person name="Gibbs R.A."/>
            <person name="Myers E.W."/>
            <person name="Rubin G.M."/>
            <person name="Venter J.C."/>
        </authorList>
    </citation>
    <scope>NUCLEOTIDE SEQUENCE [LARGE SCALE GENOMIC DNA]</scope>
    <source>
        <strain>Berkeley</strain>
    </source>
</reference>
<reference key="2">
    <citation type="journal article" date="2002" name="Genome Biol.">
        <title>Annotation of the Drosophila melanogaster euchromatic genome: a systematic review.</title>
        <authorList>
            <person name="Misra S."/>
            <person name="Crosby M.A."/>
            <person name="Mungall C.J."/>
            <person name="Matthews B.B."/>
            <person name="Campbell K.S."/>
            <person name="Hradecky P."/>
            <person name="Huang Y."/>
            <person name="Kaminker J.S."/>
            <person name="Millburn G.H."/>
            <person name="Prochnik S.E."/>
            <person name="Smith C.D."/>
            <person name="Tupy J.L."/>
            <person name="Whitfield E.J."/>
            <person name="Bayraktaroglu L."/>
            <person name="Berman B.P."/>
            <person name="Bettencourt B.R."/>
            <person name="Celniker S.E."/>
            <person name="de Grey A.D.N.J."/>
            <person name="Drysdale R.A."/>
            <person name="Harris N.L."/>
            <person name="Richter J."/>
            <person name="Russo S."/>
            <person name="Schroeder A.J."/>
            <person name="Shu S.Q."/>
            <person name="Stapleton M."/>
            <person name="Yamada C."/>
            <person name="Ashburner M."/>
            <person name="Gelbart W.M."/>
            <person name="Rubin G.M."/>
            <person name="Lewis S.E."/>
        </authorList>
    </citation>
    <scope>GENOME REANNOTATION</scope>
    <source>
        <strain>Berkeley</strain>
    </source>
</reference>
<reference key="3">
    <citation type="journal article" date="2002" name="Genome Biol.">
        <title>A Drosophila full-length cDNA resource.</title>
        <authorList>
            <person name="Stapleton M."/>
            <person name="Carlson J.W."/>
            <person name="Brokstein P."/>
            <person name="Yu C."/>
            <person name="Champe M."/>
            <person name="George R.A."/>
            <person name="Guarin H."/>
            <person name="Kronmiller B."/>
            <person name="Pacleb J.M."/>
            <person name="Park S."/>
            <person name="Wan K.H."/>
            <person name="Rubin G.M."/>
            <person name="Celniker S.E."/>
        </authorList>
    </citation>
    <scope>NUCLEOTIDE SEQUENCE [LARGE SCALE MRNA]</scope>
    <source>
        <strain>Berkeley</strain>
        <tissue>Head</tissue>
    </source>
</reference>
<proteinExistence type="evidence at transcript level"/>
<protein>
    <recommendedName>
        <fullName>Protein FAM50 homolog</fullName>
    </recommendedName>
</protein>
<keyword id="KW-1185">Reference proteome</keyword>
<evidence type="ECO:0000256" key="1">
    <source>
        <dbReference type="SAM" id="MobiDB-lite"/>
    </source>
</evidence>
<evidence type="ECO:0000305" key="2"/>
<feature type="chain" id="PRO_0000326518" description="Protein FAM50 homolog">
    <location>
        <begin position="1"/>
        <end position="359"/>
    </location>
</feature>
<feature type="region of interest" description="Disordered" evidence="1">
    <location>
        <begin position="122"/>
        <end position="150"/>
    </location>
</feature>
<feature type="region of interest" description="Disordered" evidence="1">
    <location>
        <begin position="339"/>
        <end position="359"/>
    </location>
</feature>
<feature type="compositionally biased region" description="Acidic residues" evidence="1">
    <location>
        <begin position="123"/>
        <end position="136"/>
    </location>
</feature>
<feature type="compositionally biased region" description="Basic and acidic residues" evidence="1">
    <location>
        <begin position="137"/>
        <end position="150"/>
    </location>
</feature>